<name>DISC_DROME</name>
<evidence type="ECO:0000255" key="1">
    <source>
        <dbReference type="PROSITE-ProRule" id="PRU00042"/>
    </source>
</evidence>
<evidence type="ECO:0000256" key="2">
    <source>
        <dbReference type="SAM" id="MobiDB-lite"/>
    </source>
</evidence>
<evidence type="ECO:0000269" key="3">
    <source>
    </source>
</evidence>
<evidence type="ECO:0000269" key="4">
    <source>
    </source>
</evidence>
<evidence type="ECO:0000305" key="5"/>
<proteinExistence type="evidence at protein level"/>
<organism>
    <name type="scientific">Drosophila melanogaster</name>
    <name type="common">Fruit fly</name>
    <dbReference type="NCBI Taxonomy" id="7227"/>
    <lineage>
        <taxon>Eukaryota</taxon>
        <taxon>Metazoa</taxon>
        <taxon>Ecdysozoa</taxon>
        <taxon>Arthropoda</taxon>
        <taxon>Hexapoda</taxon>
        <taxon>Insecta</taxon>
        <taxon>Pterygota</taxon>
        <taxon>Neoptera</taxon>
        <taxon>Endopterygota</taxon>
        <taxon>Diptera</taxon>
        <taxon>Brachycera</taxon>
        <taxon>Muscomorpha</taxon>
        <taxon>Ephydroidea</taxon>
        <taxon>Drosophilidae</taxon>
        <taxon>Drosophila</taxon>
        <taxon>Sophophora</taxon>
    </lineage>
</organism>
<keyword id="KW-0217">Developmental protein</keyword>
<keyword id="KW-0238">DNA-binding</keyword>
<keyword id="KW-0479">Metal-binding</keyword>
<keyword id="KW-0539">Nucleus</keyword>
<keyword id="KW-1185">Reference proteome</keyword>
<keyword id="KW-0677">Repeat</keyword>
<keyword id="KW-0716">Sensory transduction</keyword>
<keyword id="KW-0844">Vision</keyword>
<keyword id="KW-0862">Zinc</keyword>
<keyword id="KW-0863">Zinc-finger</keyword>
<reference key="1">
    <citation type="journal article" date="1991" name="EMBO J.">
        <title>Isolation and characterization of the disconnected gene of Drosophila melanogaster.</title>
        <authorList>
            <person name="Heilig J.S."/>
            <person name="Freeman M."/>
            <person name="Laverty T."/>
            <person name="Lee K.J."/>
            <person name="Campos A.R."/>
            <person name="Rubin G.M."/>
            <person name="Steller H."/>
        </authorList>
    </citation>
    <scope>NUCLEOTIDE SEQUENCE [GENOMIC DNA]</scope>
    <scope>FUNCTION</scope>
    <scope>TISSUE SPECIFICITY</scope>
    <scope>DEVELOPMENTAL STAGE</scope>
    <scope>MUTAGENESIS OF CYS-94 AND CYS-127</scope>
    <source>
        <strain>Canton-S</strain>
    </source>
</reference>
<reference key="2">
    <citation type="journal article" date="2000" name="Science">
        <title>The genome sequence of Drosophila melanogaster.</title>
        <authorList>
            <person name="Adams M.D."/>
            <person name="Celniker S.E."/>
            <person name="Holt R.A."/>
            <person name="Evans C.A."/>
            <person name="Gocayne J.D."/>
            <person name="Amanatides P.G."/>
            <person name="Scherer S.E."/>
            <person name="Li P.W."/>
            <person name="Hoskins R.A."/>
            <person name="Galle R.F."/>
            <person name="George R.A."/>
            <person name="Lewis S.E."/>
            <person name="Richards S."/>
            <person name="Ashburner M."/>
            <person name="Henderson S.N."/>
            <person name="Sutton G.G."/>
            <person name="Wortman J.R."/>
            <person name="Yandell M.D."/>
            <person name="Zhang Q."/>
            <person name="Chen L.X."/>
            <person name="Brandon R.C."/>
            <person name="Rogers Y.-H.C."/>
            <person name="Blazej R.G."/>
            <person name="Champe M."/>
            <person name="Pfeiffer B.D."/>
            <person name="Wan K.H."/>
            <person name="Doyle C."/>
            <person name="Baxter E.G."/>
            <person name="Helt G."/>
            <person name="Nelson C.R."/>
            <person name="Miklos G.L.G."/>
            <person name="Abril J.F."/>
            <person name="Agbayani A."/>
            <person name="An H.-J."/>
            <person name="Andrews-Pfannkoch C."/>
            <person name="Baldwin D."/>
            <person name="Ballew R.M."/>
            <person name="Basu A."/>
            <person name="Baxendale J."/>
            <person name="Bayraktaroglu L."/>
            <person name="Beasley E.M."/>
            <person name="Beeson K.Y."/>
            <person name="Benos P.V."/>
            <person name="Berman B.P."/>
            <person name="Bhandari D."/>
            <person name="Bolshakov S."/>
            <person name="Borkova D."/>
            <person name="Botchan M.R."/>
            <person name="Bouck J."/>
            <person name="Brokstein P."/>
            <person name="Brottier P."/>
            <person name="Burtis K.C."/>
            <person name="Busam D.A."/>
            <person name="Butler H."/>
            <person name="Cadieu E."/>
            <person name="Center A."/>
            <person name="Chandra I."/>
            <person name="Cherry J.M."/>
            <person name="Cawley S."/>
            <person name="Dahlke C."/>
            <person name="Davenport L.B."/>
            <person name="Davies P."/>
            <person name="de Pablos B."/>
            <person name="Delcher A."/>
            <person name="Deng Z."/>
            <person name="Mays A.D."/>
            <person name="Dew I."/>
            <person name="Dietz S.M."/>
            <person name="Dodson K."/>
            <person name="Doup L.E."/>
            <person name="Downes M."/>
            <person name="Dugan-Rocha S."/>
            <person name="Dunkov B.C."/>
            <person name="Dunn P."/>
            <person name="Durbin K.J."/>
            <person name="Evangelista C.C."/>
            <person name="Ferraz C."/>
            <person name="Ferriera S."/>
            <person name="Fleischmann W."/>
            <person name="Fosler C."/>
            <person name="Gabrielian A.E."/>
            <person name="Garg N.S."/>
            <person name="Gelbart W.M."/>
            <person name="Glasser K."/>
            <person name="Glodek A."/>
            <person name="Gong F."/>
            <person name="Gorrell J.H."/>
            <person name="Gu Z."/>
            <person name="Guan P."/>
            <person name="Harris M."/>
            <person name="Harris N.L."/>
            <person name="Harvey D.A."/>
            <person name="Heiman T.J."/>
            <person name="Hernandez J.R."/>
            <person name="Houck J."/>
            <person name="Hostin D."/>
            <person name="Houston K.A."/>
            <person name="Howland T.J."/>
            <person name="Wei M.-H."/>
            <person name="Ibegwam C."/>
            <person name="Jalali M."/>
            <person name="Kalush F."/>
            <person name="Karpen G.H."/>
            <person name="Ke Z."/>
            <person name="Kennison J.A."/>
            <person name="Ketchum K.A."/>
            <person name="Kimmel B.E."/>
            <person name="Kodira C.D."/>
            <person name="Kraft C.L."/>
            <person name="Kravitz S."/>
            <person name="Kulp D."/>
            <person name="Lai Z."/>
            <person name="Lasko P."/>
            <person name="Lei Y."/>
            <person name="Levitsky A.A."/>
            <person name="Li J.H."/>
            <person name="Li Z."/>
            <person name="Liang Y."/>
            <person name="Lin X."/>
            <person name="Liu X."/>
            <person name="Mattei B."/>
            <person name="McIntosh T.C."/>
            <person name="McLeod M.P."/>
            <person name="McPherson D."/>
            <person name="Merkulov G."/>
            <person name="Milshina N.V."/>
            <person name="Mobarry C."/>
            <person name="Morris J."/>
            <person name="Moshrefi A."/>
            <person name="Mount S.M."/>
            <person name="Moy M."/>
            <person name="Murphy B."/>
            <person name="Murphy L."/>
            <person name="Muzny D.M."/>
            <person name="Nelson D.L."/>
            <person name="Nelson D.R."/>
            <person name="Nelson K.A."/>
            <person name="Nixon K."/>
            <person name="Nusskern D.R."/>
            <person name="Pacleb J.M."/>
            <person name="Palazzolo M."/>
            <person name="Pittman G.S."/>
            <person name="Pan S."/>
            <person name="Pollard J."/>
            <person name="Puri V."/>
            <person name="Reese M.G."/>
            <person name="Reinert K."/>
            <person name="Remington K."/>
            <person name="Saunders R.D.C."/>
            <person name="Scheeler F."/>
            <person name="Shen H."/>
            <person name="Shue B.C."/>
            <person name="Siden-Kiamos I."/>
            <person name="Simpson M."/>
            <person name="Skupski M.P."/>
            <person name="Smith T.J."/>
            <person name="Spier E."/>
            <person name="Spradling A.C."/>
            <person name="Stapleton M."/>
            <person name="Strong R."/>
            <person name="Sun E."/>
            <person name="Svirskas R."/>
            <person name="Tector C."/>
            <person name="Turner R."/>
            <person name="Venter E."/>
            <person name="Wang A.H."/>
            <person name="Wang X."/>
            <person name="Wang Z.-Y."/>
            <person name="Wassarman D.A."/>
            <person name="Weinstock G.M."/>
            <person name="Weissenbach J."/>
            <person name="Williams S.M."/>
            <person name="Woodage T."/>
            <person name="Worley K.C."/>
            <person name="Wu D."/>
            <person name="Yang S."/>
            <person name="Yao Q.A."/>
            <person name="Ye J."/>
            <person name="Yeh R.-F."/>
            <person name="Zaveri J.S."/>
            <person name="Zhan M."/>
            <person name="Zhang G."/>
            <person name="Zhao Q."/>
            <person name="Zheng L."/>
            <person name="Zheng X.H."/>
            <person name="Zhong F.N."/>
            <person name="Zhong W."/>
            <person name="Zhou X."/>
            <person name="Zhu S.C."/>
            <person name="Zhu X."/>
            <person name="Smith H.O."/>
            <person name="Gibbs R.A."/>
            <person name="Myers E.W."/>
            <person name="Rubin G.M."/>
            <person name="Venter J.C."/>
        </authorList>
    </citation>
    <scope>NUCLEOTIDE SEQUENCE [LARGE SCALE GENOMIC DNA]</scope>
    <source>
        <strain>Berkeley</strain>
    </source>
</reference>
<reference key="3">
    <citation type="journal article" date="2002" name="Genome Biol.">
        <title>Annotation of the Drosophila melanogaster euchromatic genome: a systematic review.</title>
        <authorList>
            <person name="Misra S."/>
            <person name="Crosby M.A."/>
            <person name="Mungall C.J."/>
            <person name="Matthews B.B."/>
            <person name="Campbell K.S."/>
            <person name="Hradecky P."/>
            <person name="Huang Y."/>
            <person name="Kaminker J.S."/>
            <person name="Millburn G.H."/>
            <person name="Prochnik S.E."/>
            <person name="Smith C.D."/>
            <person name="Tupy J.L."/>
            <person name="Whitfield E.J."/>
            <person name="Bayraktaroglu L."/>
            <person name="Berman B.P."/>
            <person name="Bettencourt B.R."/>
            <person name="Celniker S.E."/>
            <person name="de Grey A.D.N.J."/>
            <person name="Drysdale R.A."/>
            <person name="Harris N.L."/>
            <person name="Richter J."/>
            <person name="Russo S."/>
            <person name="Schroeder A.J."/>
            <person name="Shu S.Q."/>
            <person name="Stapleton M."/>
            <person name="Yamada C."/>
            <person name="Ashburner M."/>
            <person name="Gelbart W.M."/>
            <person name="Rubin G.M."/>
            <person name="Lewis S.E."/>
        </authorList>
    </citation>
    <scope>GENOME REANNOTATION</scope>
    <source>
        <strain>Berkeley</strain>
    </source>
</reference>
<reference key="4">
    <citation type="submission" date="2003-01" db="EMBL/GenBank/DDBJ databases">
        <authorList>
            <person name="Stapleton M."/>
            <person name="Brokstein P."/>
            <person name="Hong L."/>
            <person name="Agbayani A."/>
            <person name="Carlson J.W."/>
            <person name="Champe M."/>
            <person name="Chavez C."/>
            <person name="Dorsett V."/>
            <person name="Dresnek D."/>
            <person name="Farfan D."/>
            <person name="Frise E."/>
            <person name="George R.A."/>
            <person name="Gonzalez M."/>
            <person name="Guarin H."/>
            <person name="Kronmiller B."/>
            <person name="Li P.W."/>
            <person name="Liao G."/>
            <person name="Miranda A."/>
            <person name="Mungall C.J."/>
            <person name="Nunoo J."/>
            <person name="Pacleb J.M."/>
            <person name="Paragas V."/>
            <person name="Park S."/>
            <person name="Patel S."/>
            <person name="Phouanenavong S."/>
            <person name="Wan K.H."/>
            <person name="Yu C."/>
            <person name="Lewis S.E."/>
            <person name="Rubin G.M."/>
            <person name="Celniker S.E."/>
        </authorList>
    </citation>
    <scope>NUCLEOTIDE SEQUENCE [LARGE SCALE MRNA]</scope>
    <source>
        <strain>Berkeley</strain>
        <tissue>Head</tissue>
    </source>
</reference>
<reference key="5">
    <citation type="journal article" date="1991" name="EMBO J.">
        <title>Expression of the disconnected gene during development of Drosophila melanogaster.</title>
        <authorList>
            <person name="Lee K.J."/>
            <person name="Freeman M."/>
            <person name="Steller H."/>
        </authorList>
    </citation>
    <scope>DEVELOPMENTAL STAGE</scope>
</reference>
<dbReference type="EMBL" id="X56232">
    <property type="protein sequence ID" value="CAA39689.1"/>
    <property type="molecule type" value="Genomic_DNA"/>
</dbReference>
<dbReference type="EMBL" id="AE014298">
    <property type="protein sequence ID" value="AAF48568.1"/>
    <property type="molecule type" value="Genomic_DNA"/>
</dbReference>
<dbReference type="EMBL" id="AE014298">
    <property type="protein sequence ID" value="ABC67185.1"/>
    <property type="molecule type" value="Genomic_DNA"/>
</dbReference>
<dbReference type="EMBL" id="BT003295">
    <property type="protein sequence ID" value="AAO25055.1"/>
    <property type="molecule type" value="mRNA"/>
</dbReference>
<dbReference type="PIR" id="S15008">
    <property type="entry name" value="S15008"/>
</dbReference>
<dbReference type="RefSeq" id="NP_001033847.1">
    <property type="nucleotide sequence ID" value="NM_001038758.2"/>
</dbReference>
<dbReference type="RefSeq" id="NP_523362.2">
    <property type="nucleotide sequence ID" value="NM_078638.4"/>
</dbReference>
<dbReference type="BioGRID" id="58921">
    <property type="interactions" value="75"/>
</dbReference>
<dbReference type="DIP" id="DIP-19064N"/>
<dbReference type="FunCoup" id="P23792">
    <property type="interactions" value="91"/>
</dbReference>
<dbReference type="IntAct" id="P23792">
    <property type="interactions" value="57"/>
</dbReference>
<dbReference type="STRING" id="7227.FBpp0074028"/>
<dbReference type="PaxDb" id="7227-FBpp0074028"/>
<dbReference type="DNASU" id="32579"/>
<dbReference type="EnsemblMetazoa" id="FBtr0074250">
    <property type="protein sequence ID" value="FBpp0074028"/>
    <property type="gene ID" value="FBgn0000459"/>
</dbReference>
<dbReference type="EnsemblMetazoa" id="FBtr0100384">
    <property type="protein sequence ID" value="FBpp0099796"/>
    <property type="gene ID" value="FBgn0000459"/>
</dbReference>
<dbReference type="GeneID" id="32579"/>
<dbReference type="KEGG" id="dme:Dmel_CG9908"/>
<dbReference type="UCSC" id="CG9908-RA">
    <property type="organism name" value="d. melanogaster"/>
</dbReference>
<dbReference type="AGR" id="FB:FBgn0000459"/>
<dbReference type="CTD" id="32579"/>
<dbReference type="FlyBase" id="FBgn0000459">
    <property type="gene designation" value="disco"/>
</dbReference>
<dbReference type="VEuPathDB" id="VectorBase:FBgn0000459"/>
<dbReference type="eggNOG" id="ENOG502QR8N">
    <property type="taxonomic scope" value="Eukaryota"/>
</dbReference>
<dbReference type="GeneTree" id="ENSGT00390000005844"/>
<dbReference type="HOGENOM" id="CLU_521012_0_0_1"/>
<dbReference type="InParanoid" id="P23792"/>
<dbReference type="OMA" id="VYRSMLL"/>
<dbReference type="OrthoDB" id="10070972at2759"/>
<dbReference type="PhylomeDB" id="P23792"/>
<dbReference type="SignaLink" id="P23792"/>
<dbReference type="BioGRID-ORCS" id="32579">
    <property type="hits" value="0 hits in 3 CRISPR screens"/>
</dbReference>
<dbReference type="ChiTaRS" id="disco">
    <property type="organism name" value="fly"/>
</dbReference>
<dbReference type="GenomeRNAi" id="32579"/>
<dbReference type="PRO" id="PR:P23792"/>
<dbReference type="Proteomes" id="UP000000803">
    <property type="component" value="Chromosome X"/>
</dbReference>
<dbReference type="Bgee" id="FBgn0000459">
    <property type="expression patterns" value="Expressed in fat body cell in proboscis and 125 other cell types or tissues"/>
</dbReference>
<dbReference type="GO" id="GO:0005634">
    <property type="term" value="C:nucleus"/>
    <property type="evidence" value="ECO:0000314"/>
    <property type="project" value="FlyBase"/>
</dbReference>
<dbReference type="GO" id="GO:0003677">
    <property type="term" value="F:DNA binding"/>
    <property type="evidence" value="ECO:0000314"/>
    <property type="project" value="FlyBase"/>
</dbReference>
<dbReference type="GO" id="GO:0000977">
    <property type="term" value="F:RNA polymerase II transcription regulatory region sequence-specific DNA binding"/>
    <property type="evidence" value="ECO:0000314"/>
    <property type="project" value="FlyBase"/>
</dbReference>
<dbReference type="GO" id="GO:0008270">
    <property type="term" value="F:zinc ion binding"/>
    <property type="evidence" value="ECO:0007669"/>
    <property type="project" value="UniProtKB-KW"/>
</dbReference>
<dbReference type="GO" id="GO:0007469">
    <property type="term" value="P:antennal development"/>
    <property type="evidence" value="ECO:0000315"/>
    <property type="project" value="FlyBase"/>
</dbReference>
<dbReference type="GO" id="GO:0007420">
    <property type="term" value="P:brain development"/>
    <property type="evidence" value="ECO:0000315"/>
    <property type="project" value="FlyBase"/>
</dbReference>
<dbReference type="GO" id="GO:0007623">
    <property type="term" value="P:circadian rhythm"/>
    <property type="evidence" value="ECO:0000303"/>
    <property type="project" value="FlyBase"/>
</dbReference>
<dbReference type="GO" id="GO:0008062">
    <property type="term" value="P:eclosion rhythm"/>
    <property type="evidence" value="ECO:0000315"/>
    <property type="project" value="FlyBase"/>
</dbReference>
<dbReference type="GO" id="GO:0007479">
    <property type="term" value="P:leg disc proximal/distal pattern formation"/>
    <property type="evidence" value="ECO:0000315"/>
    <property type="project" value="FlyBase"/>
</dbReference>
<dbReference type="GO" id="GO:0045475">
    <property type="term" value="P:locomotor rhythm"/>
    <property type="evidence" value="ECO:0000315"/>
    <property type="project" value="FlyBase"/>
</dbReference>
<dbReference type="GO" id="GO:0045494">
    <property type="term" value="P:photoreceptor cell maintenance"/>
    <property type="evidence" value="ECO:0000303"/>
    <property type="project" value="FlyBase"/>
</dbReference>
<dbReference type="GO" id="GO:0045893">
    <property type="term" value="P:positive regulation of DNA-templated transcription"/>
    <property type="evidence" value="ECO:0000315"/>
    <property type="project" value="FlyBase"/>
</dbReference>
<dbReference type="GO" id="GO:0045944">
    <property type="term" value="P:positive regulation of transcription by RNA polymerase II"/>
    <property type="evidence" value="ECO:0000314"/>
    <property type="project" value="FlyBase"/>
</dbReference>
<dbReference type="GO" id="GO:0006355">
    <property type="term" value="P:regulation of DNA-templated transcription"/>
    <property type="evidence" value="ECO:0000318"/>
    <property type="project" value="GO_Central"/>
</dbReference>
<dbReference type="GO" id="GO:0010468">
    <property type="term" value="P:regulation of gene expression"/>
    <property type="evidence" value="ECO:0000315"/>
    <property type="project" value="FlyBase"/>
</dbReference>
<dbReference type="GO" id="GO:0007601">
    <property type="term" value="P:visual perception"/>
    <property type="evidence" value="ECO:0007669"/>
    <property type="project" value="UniProtKB-KW"/>
</dbReference>
<dbReference type="Gene3D" id="3.30.160.60">
    <property type="entry name" value="Classic Zinc Finger"/>
    <property type="match status" value="1"/>
</dbReference>
<dbReference type="InterPro" id="IPR040436">
    <property type="entry name" value="Disconnected-like"/>
</dbReference>
<dbReference type="InterPro" id="IPR013087">
    <property type="entry name" value="Znf_C2H2_type"/>
</dbReference>
<dbReference type="PANTHER" id="PTHR15021:SF0">
    <property type="entry name" value="DISCO-RELATED, ISOFORM A-RELATED"/>
    <property type="match status" value="1"/>
</dbReference>
<dbReference type="PANTHER" id="PTHR15021">
    <property type="entry name" value="DISCONNECTED-RELATED"/>
    <property type="match status" value="1"/>
</dbReference>
<dbReference type="SMART" id="SM00355">
    <property type="entry name" value="ZnF_C2H2"/>
    <property type="match status" value="2"/>
</dbReference>
<dbReference type="PROSITE" id="PS00028">
    <property type="entry name" value="ZINC_FINGER_C2H2_1"/>
    <property type="match status" value="1"/>
</dbReference>
<dbReference type="PROSITE" id="PS50157">
    <property type="entry name" value="ZINC_FINGER_C2H2_2"/>
    <property type="match status" value="1"/>
</dbReference>
<protein>
    <recommendedName>
        <fullName>Protein disconnected</fullName>
    </recommendedName>
</protein>
<feature type="chain" id="PRO_0000046919" description="Protein disconnected">
    <location>
        <begin position="1"/>
        <end position="568"/>
    </location>
</feature>
<feature type="zinc finger region" description="C2H2-type 1" evidence="1">
    <location>
        <begin position="92"/>
        <end position="115"/>
    </location>
</feature>
<feature type="zinc finger region" description="C2H2-type 2" evidence="1">
    <location>
        <begin position="120"/>
        <end position="145"/>
    </location>
</feature>
<feature type="region of interest" description="Disordered" evidence="2">
    <location>
        <begin position="16"/>
        <end position="77"/>
    </location>
</feature>
<feature type="region of interest" description="Disordered" evidence="2">
    <location>
        <begin position="134"/>
        <end position="157"/>
    </location>
</feature>
<feature type="region of interest" description="Disordered" evidence="2">
    <location>
        <begin position="220"/>
        <end position="364"/>
    </location>
</feature>
<feature type="region of interest" description="Disordered" evidence="2">
    <location>
        <begin position="391"/>
        <end position="419"/>
    </location>
</feature>
<feature type="region of interest" description="Disordered" evidence="2">
    <location>
        <begin position="501"/>
        <end position="568"/>
    </location>
</feature>
<feature type="compositionally biased region" description="Basic residues" evidence="2">
    <location>
        <begin position="19"/>
        <end position="29"/>
    </location>
</feature>
<feature type="compositionally biased region" description="Low complexity" evidence="2">
    <location>
        <begin position="30"/>
        <end position="45"/>
    </location>
</feature>
<feature type="compositionally biased region" description="Gly residues" evidence="2">
    <location>
        <begin position="46"/>
        <end position="62"/>
    </location>
</feature>
<feature type="compositionally biased region" description="Acidic residues" evidence="2">
    <location>
        <begin position="235"/>
        <end position="246"/>
    </location>
</feature>
<feature type="compositionally biased region" description="Polar residues" evidence="2">
    <location>
        <begin position="253"/>
        <end position="263"/>
    </location>
</feature>
<feature type="compositionally biased region" description="Low complexity" evidence="2">
    <location>
        <begin position="282"/>
        <end position="292"/>
    </location>
</feature>
<feature type="compositionally biased region" description="Basic and acidic residues" evidence="2">
    <location>
        <begin position="313"/>
        <end position="360"/>
    </location>
</feature>
<feature type="compositionally biased region" description="Low complexity" evidence="2">
    <location>
        <begin position="391"/>
        <end position="402"/>
    </location>
</feature>
<feature type="compositionally biased region" description="Basic residues" evidence="2">
    <location>
        <begin position="520"/>
        <end position="550"/>
    </location>
</feature>
<feature type="compositionally biased region" description="Polar residues" evidence="2">
    <location>
        <begin position="558"/>
        <end position="568"/>
    </location>
</feature>
<feature type="mutagenesis site" description="In Disco-1." evidence="3">
    <original>C</original>
    <variation>Y</variation>
    <location>
        <position position="94"/>
    </location>
</feature>
<feature type="mutagenesis site" description="In Disco-1656." evidence="3">
    <original>C</original>
    <variation>S</variation>
    <location>
        <position position="127"/>
    </location>
</feature>
<feature type="sequence conflict" description="In Ref. 1; CAA39689." evidence="5" ref="1">
    <original>D</original>
    <variation>E</variation>
    <location>
        <position position="412"/>
    </location>
</feature>
<comment type="function">
    <text evidence="3">Required for the establishment of stable connections between the larval optic nerves, the Bolwig's nerves, and their target cells in the brain during embryonic development.</text>
</comment>
<comment type="interaction">
    <interactant intactId="EBI-152064">
        <id>P23792</id>
    </interactant>
    <interactant intactId="EBI-166061">
        <id>B6VQA1</id>
        <label>dimm</label>
    </interactant>
    <organismsDiffer>false</organismsDiffer>
    <experiments>3</experiments>
</comment>
<comment type="interaction">
    <interactant intactId="EBI-152064">
        <id>P23792</id>
    </interactant>
    <interactant intactId="EBI-443968">
        <id>Q9TW27</id>
        <label>DIP1</label>
    </interactant>
    <organismsDiffer>false</organismsDiffer>
    <experiments>2</experiments>
</comment>
<comment type="interaction">
    <interactant intactId="EBI-152064">
        <id>P23792</id>
    </interactant>
    <interactant intactId="EBI-163796">
        <id>Q8T3W6</id>
        <label>hale</label>
    </interactant>
    <organismsDiffer>false</organismsDiffer>
    <experiments>4</experiments>
</comment>
<comment type="subcellular location">
    <subcellularLocation>
        <location evidence="5">Nucleus</location>
    </subcellularLocation>
</comment>
<comment type="tissue specificity">
    <text evidence="3">Expressed at low levels in the adult head and very low, but detectable, levels in the body.</text>
</comment>
<comment type="developmental stage">
    <text evidence="3 4">Expression is seen as early as 6 hours of embryonic development and continues throughout embryonic and larval stages, increasing in abundance at each larval molt. The level remains high during pupal life but decreases to low levels in the adult.</text>
</comment>
<sequence length="568" mass="62369">MEHIMNPFMSPAYLLGHGPHSHQHVHSHLPSHPQPNAASPASSPGGSSGSGSGSAAGSGTGSGSSLKPRRWGSPPINLAGQFINPATGKKRVQCSICFKTFCDKGALKIHFSAVHLREMHKCTVEGCNMVFSSRRSRNRHSANPNPKLHSPHIRRKISPHDGRTAQQFPVFSPGTAAAAAAVAGRLPVAFPGLLPPPPPHHGHHPYVMFGGQAGLHGLGLLSTGCQDPDSGSVDNEQDADPEDDNDFVYVDMQANSSSPAASSEDQEEHERDNEQDEEMHCSLSLASSSSIAADEERAADQPLDFSLHKRRKSEQDREQEQEQEQEREREAEKEQEQDVESDKEHEPEQEHELEREKRSPSDAFSMDQLLGKRKRHDSTASSSACSTAAASSASSSSASASANPPQTSIKMDLDPDSDSAYMTSRRQMLPLPVLDLEEHHHLRLLQTQMFAAAAAAAATSQAPPTAFLPAGSPVDLAKDSPPMWSLLSEMYRSMLLKTQHQQYNHHHQLQQQHQQEQHHHLTLSHHHQEQHHHLGHHHMGHHHHHHHQHHQQQPQQQSPAATNAPISV</sequence>
<gene>
    <name type="primary">disco</name>
    <name type="ORF">CG9908</name>
</gene>
<accession>P23792</accession>
<accession>Q53YG0</accession>
<accession>Q9VXJ4</accession>